<reference key="1">
    <citation type="journal article" date="2001" name="Lancet">
        <title>Whole genome sequencing of meticillin-resistant Staphylococcus aureus.</title>
        <authorList>
            <person name="Kuroda M."/>
            <person name="Ohta T."/>
            <person name="Uchiyama I."/>
            <person name="Baba T."/>
            <person name="Yuzawa H."/>
            <person name="Kobayashi I."/>
            <person name="Cui L."/>
            <person name="Oguchi A."/>
            <person name="Aoki K."/>
            <person name="Nagai Y."/>
            <person name="Lian J.-Q."/>
            <person name="Ito T."/>
            <person name="Kanamori M."/>
            <person name="Matsumaru H."/>
            <person name="Maruyama A."/>
            <person name="Murakami H."/>
            <person name="Hosoyama A."/>
            <person name="Mizutani-Ui Y."/>
            <person name="Takahashi N.K."/>
            <person name="Sawano T."/>
            <person name="Inoue R."/>
            <person name="Kaito C."/>
            <person name="Sekimizu K."/>
            <person name="Hirakawa H."/>
            <person name="Kuhara S."/>
            <person name="Goto S."/>
            <person name="Yabuzaki J."/>
            <person name="Kanehisa M."/>
            <person name="Yamashita A."/>
            <person name="Oshima K."/>
            <person name="Furuya K."/>
            <person name="Yoshino C."/>
            <person name="Shiba T."/>
            <person name="Hattori M."/>
            <person name="Ogasawara N."/>
            <person name="Hayashi H."/>
            <person name="Hiramatsu K."/>
        </authorList>
    </citation>
    <scope>NUCLEOTIDE SEQUENCE [LARGE SCALE GENOMIC DNA]</scope>
    <source>
        <strain>N315</strain>
    </source>
</reference>
<sequence>MRVNVTLACTECGDRNYITTKNKRNNPERVEMKKFCSRENKQTLHRETK</sequence>
<name>RL331_STAAN</name>
<proteinExistence type="inferred from homology"/>
<gene>
    <name type="primary">rpmG1</name>
    <name type="ordered locus">SA1380.1</name>
    <name type="ORF">SAS047</name>
</gene>
<comment type="similarity">
    <text evidence="2">Belongs to the bacterial ribosomal protein bL33 family.</text>
</comment>
<feature type="chain" id="PRO_0000170216" description="Large ribosomal subunit protein bL33A">
    <location>
        <begin position="1"/>
        <end position="49"/>
    </location>
</feature>
<protein>
    <recommendedName>
        <fullName evidence="1">Large ribosomal subunit protein bL33A</fullName>
    </recommendedName>
    <alternativeName>
        <fullName>50S ribosomal protein L33 1</fullName>
    </alternativeName>
</protein>
<evidence type="ECO:0000255" key="1">
    <source>
        <dbReference type="HAMAP-Rule" id="MF_00294"/>
    </source>
</evidence>
<evidence type="ECO:0000305" key="2"/>
<dbReference type="EMBL" id="BA000018">
    <property type="protein sequence ID" value="BAB42643.1"/>
    <property type="molecule type" value="Genomic_DNA"/>
</dbReference>
<dbReference type="PIR" id="F89935">
    <property type="entry name" value="F89935"/>
</dbReference>
<dbReference type="SMR" id="P66228"/>
<dbReference type="EnsemblBacteria" id="BAB42643">
    <property type="protein sequence ID" value="BAB42643"/>
    <property type="gene ID" value="BAB42643"/>
</dbReference>
<dbReference type="KEGG" id="sau:SAS047"/>
<dbReference type="HOGENOM" id="CLU_190949_0_2_9"/>
<dbReference type="GO" id="GO:0005737">
    <property type="term" value="C:cytoplasm"/>
    <property type="evidence" value="ECO:0007669"/>
    <property type="project" value="UniProtKB-ARBA"/>
</dbReference>
<dbReference type="GO" id="GO:1990904">
    <property type="term" value="C:ribonucleoprotein complex"/>
    <property type="evidence" value="ECO:0007669"/>
    <property type="project" value="UniProtKB-KW"/>
</dbReference>
<dbReference type="GO" id="GO:0005840">
    <property type="term" value="C:ribosome"/>
    <property type="evidence" value="ECO:0007669"/>
    <property type="project" value="UniProtKB-KW"/>
</dbReference>
<dbReference type="GO" id="GO:0003735">
    <property type="term" value="F:structural constituent of ribosome"/>
    <property type="evidence" value="ECO:0007669"/>
    <property type="project" value="InterPro"/>
</dbReference>
<dbReference type="GO" id="GO:0006412">
    <property type="term" value="P:translation"/>
    <property type="evidence" value="ECO:0007669"/>
    <property type="project" value="UniProtKB-UniRule"/>
</dbReference>
<dbReference type="Gene3D" id="2.20.28.120">
    <property type="entry name" value="Ribosomal protein L33"/>
    <property type="match status" value="1"/>
</dbReference>
<dbReference type="HAMAP" id="MF_00294">
    <property type="entry name" value="Ribosomal_bL33"/>
    <property type="match status" value="1"/>
</dbReference>
<dbReference type="InterPro" id="IPR001705">
    <property type="entry name" value="Ribosomal_bL33"/>
</dbReference>
<dbReference type="InterPro" id="IPR018264">
    <property type="entry name" value="Ribosomal_bL33_CS"/>
</dbReference>
<dbReference type="InterPro" id="IPR038584">
    <property type="entry name" value="Ribosomal_bL33_sf"/>
</dbReference>
<dbReference type="InterPro" id="IPR011332">
    <property type="entry name" value="Ribosomal_zn-bd"/>
</dbReference>
<dbReference type="NCBIfam" id="NF001764">
    <property type="entry name" value="PRK00504.1"/>
    <property type="match status" value="1"/>
</dbReference>
<dbReference type="NCBIfam" id="NF001860">
    <property type="entry name" value="PRK00595.1"/>
    <property type="match status" value="1"/>
</dbReference>
<dbReference type="NCBIfam" id="TIGR01023">
    <property type="entry name" value="rpmG_bact"/>
    <property type="match status" value="1"/>
</dbReference>
<dbReference type="PANTHER" id="PTHR43168">
    <property type="entry name" value="50S RIBOSOMAL PROTEIN L33, CHLOROPLASTIC"/>
    <property type="match status" value="1"/>
</dbReference>
<dbReference type="PANTHER" id="PTHR43168:SF2">
    <property type="entry name" value="LARGE RIBOSOMAL SUBUNIT PROTEIN BL33C"/>
    <property type="match status" value="1"/>
</dbReference>
<dbReference type="Pfam" id="PF00471">
    <property type="entry name" value="Ribosomal_L33"/>
    <property type="match status" value="1"/>
</dbReference>
<dbReference type="SUPFAM" id="SSF57829">
    <property type="entry name" value="Zn-binding ribosomal proteins"/>
    <property type="match status" value="1"/>
</dbReference>
<dbReference type="PROSITE" id="PS00582">
    <property type="entry name" value="RIBOSOMAL_L33"/>
    <property type="match status" value="1"/>
</dbReference>
<keyword id="KW-0687">Ribonucleoprotein</keyword>
<keyword id="KW-0689">Ribosomal protein</keyword>
<accession>P66228</accession>
<accession>Q99TU3</accession>
<organism>
    <name type="scientific">Staphylococcus aureus (strain N315)</name>
    <dbReference type="NCBI Taxonomy" id="158879"/>
    <lineage>
        <taxon>Bacteria</taxon>
        <taxon>Bacillati</taxon>
        <taxon>Bacillota</taxon>
        <taxon>Bacilli</taxon>
        <taxon>Bacillales</taxon>
        <taxon>Staphylococcaceae</taxon>
        <taxon>Staphylococcus</taxon>
    </lineage>
</organism>